<proteinExistence type="inferred from homology"/>
<organism>
    <name type="scientific">Pyrococcus furiosus (strain ATCC 43587 / DSM 3638 / JCM 8422 / Vc1)</name>
    <dbReference type="NCBI Taxonomy" id="186497"/>
    <lineage>
        <taxon>Archaea</taxon>
        <taxon>Methanobacteriati</taxon>
        <taxon>Methanobacteriota</taxon>
        <taxon>Thermococci</taxon>
        <taxon>Thermococcales</taxon>
        <taxon>Thermococcaceae</taxon>
        <taxon>Pyrococcus</taxon>
    </lineage>
</organism>
<reference key="1">
    <citation type="journal article" date="1999" name="Genetics">
        <title>Divergence of the hyperthermophilic archaea Pyrococcus furiosus and P. horikoshii inferred from complete genomic sequences.</title>
        <authorList>
            <person name="Maeder D.L."/>
            <person name="Weiss R.B."/>
            <person name="Dunn D.M."/>
            <person name="Cherry J.L."/>
            <person name="Gonzalez J.M."/>
            <person name="DiRuggiero J."/>
            <person name="Robb F.T."/>
        </authorList>
    </citation>
    <scope>NUCLEOTIDE SEQUENCE [LARGE SCALE GENOMIC DNA]</scope>
    <source>
        <strain>ATCC 43587 / DSM 3638 / JCM 8422 / Vc1</strain>
    </source>
</reference>
<feature type="chain" id="PRO_0000094531" description="UPF0200 protein PF1294">
    <location>
        <begin position="1"/>
        <end position="186"/>
    </location>
</feature>
<feature type="binding site" evidence="1">
    <location>
        <begin position="7"/>
        <end position="14"/>
    </location>
    <ligand>
        <name>ATP</name>
        <dbReference type="ChEBI" id="CHEBI:30616"/>
    </ligand>
</feature>
<gene>
    <name type="ordered locus">PF1294</name>
</gene>
<keyword id="KW-0067">ATP-binding</keyword>
<keyword id="KW-0547">Nucleotide-binding</keyword>
<keyword id="KW-1185">Reference proteome</keyword>
<comment type="similarity">
    <text evidence="1">Belongs to the UPF0200 family.</text>
</comment>
<evidence type="ECO:0000255" key="1">
    <source>
        <dbReference type="HAMAP-Rule" id="MF_01111"/>
    </source>
</evidence>
<sequence length="186" mass="20971">MILLLTGMPGSGKGVVAREFEKRGIPVVSMGDAIREEAEKRGIPKTPEGLKEVSLKVREELGPGAVAILTVPKVRKLLELNPVVVVEGVRSPYEVEEFRKEFKNEEIKVVAIHSSPKSRFQRLLKRQRSDDPKTWEEFVERDRKELNFGIGEVIALADYIIVNECGFDQLKANIEKLISMIFDGKI</sequence>
<accession>P58833</accession>
<protein>
    <recommendedName>
        <fullName evidence="1">UPF0200 protein PF1294</fullName>
    </recommendedName>
</protein>
<name>Y1294_PYRFU</name>
<dbReference type="EMBL" id="AE009950">
    <property type="protein sequence ID" value="AAL81418.1"/>
    <property type="molecule type" value="Genomic_DNA"/>
</dbReference>
<dbReference type="RefSeq" id="WP_011012438.1">
    <property type="nucleotide sequence ID" value="NZ_CP023154.1"/>
</dbReference>
<dbReference type="SMR" id="P58833"/>
<dbReference type="STRING" id="186497.PF1294"/>
<dbReference type="PaxDb" id="186497-PF1294"/>
<dbReference type="KEGG" id="pfu:PF1294"/>
<dbReference type="PATRIC" id="fig|186497.12.peg.1357"/>
<dbReference type="eggNOG" id="arCOG01045">
    <property type="taxonomic scope" value="Archaea"/>
</dbReference>
<dbReference type="HOGENOM" id="CLU_096329_1_0_2"/>
<dbReference type="OrthoDB" id="85381at2157"/>
<dbReference type="PhylomeDB" id="P58833"/>
<dbReference type="Proteomes" id="UP000001013">
    <property type="component" value="Chromosome"/>
</dbReference>
<dbReference type="GO" id="GO:0005524">
    <property type="term" value="F:ATP binding"/>
    <property type="evidence" value="ECO:0007669"/>
    <property type="project" value="UniProtKB-UniRule"/>
</dbReference>
<dbReference type="Gene3D" id="3.40.50.300">
    <property type="entry name" value="P-loop containing nucleotide triphosphate hydrolases"/>
    <property type="match status" value="1"/>
</dbReference>
<dbReference type="HAMAP" id="MF_01111">
    <property type="entry name" value="UPF0200"/>
    <property type="match status" value="1"/>
</dbReference>
<dbReference type="InterPro" id="IPR022970">
    <property type="entry name" value="NTP_hydrolase-rel"/>
</dbReference>
<dbReference type="InterPro" id="IPR027417">
    <property type="entry name" value="P-loop_NTPase"/>
</dbReference>
<dbReference type="PANTHER" id="PTHR41930:SF1">
    <property type="entry name" value="DEPHOSPHO-COA KINASE"/>
    <property type="match status" value="1"/>
</dbReference>
<dbReference type="PANTHER" id="PTHR41930">
    <property type="entry name" value="UPF0200 PROTEIN MJ1399"/>
    <property type="match status" value="1"/>
</dbReference>
<dbReference type="Pfam" id="PF13207">
    <property type="entry name" value="AAA_17"/>
    <property type="match status" value="1"/>
</dbReference>
<dbReference type="SUPFAM" id="SSF52540">
    <property type="entry name" value="P-loop containing nucleoside triphosphate hydrolases"/>
    <property type="match status" value="1"/>
</dbReference>